<evidence type="ECO:0000250" key="1"/>
<evidence type="ECO:0000255" key="2">
    <source>
        <dbReference type="PROSITE-ProRule" id="PRU10001"/>
    </source>
</evidence>
<evidence type="ECO:0000256" key="3">
    <source>
        <dbReference type="SAM" id="MobiDB-lite"/>
    </source>
</evidence>
<evidence type="ECO:0000305" key="4"/>
<keyword id="KW-0045">Antibiotic biosynthesis</keyword>
<keyword id="KW-0520">NAD</keyword>
<keyword id="KW-0560">Oxidoreductase</keyword>
<sequence>MHSQTRAAVVTGAASGIGLALSARFARAGAGVVMADVEGGALHRRAAELIAEGARVTAVTADLTDPDAVERLAETAFDRLGDIDVVCNNAGVLGPVGQPLWEVPLERMRQVFEVNHWAHVLVARAFVPRLLERGRPAHLIHTASMSAFVVGAGSAAYAASKHADLAVARSLRADPPGDLRGTAVRVSVLCPGRVDTPMVEGLTAPRGAGGDTSVSAEDVAGVVWEALGSDRFYLFSNSDAPLRLRDQFDDVWRHVPLPPPSPEEELWPVPKTTTATTATTKH</sequence>
<gene>
    <name type="primary">pntF</name>
</gene>
<accession>E3VWI6</accession>
<reference key="1">
    <citation type="journal article" date="2011" name="J. Am. Chem. Soc.">
        <title>Genome mining in streptomyces. Discovery of an unprecedented P450-catalyzed oxidative rearrangement that is the final step in the biosynthesis of pentalenolactone.</title>
        <authorList>
            <person name="Zhu D."/>
            <person name="Seo M.J."/>
            <person name="Ikeda H."/>
            <person name="Cane D.E."/>
        </authorList>
    </citation>
    <scope>NUCLEOTIDE SEQUENCE [GENOMIC DNA]</scope>
    <source>
        <strain>Tu469</strain>
    </source>
</reference>
<name>PNTF_STRAE</name>
<feature type="chain" id="PRO_0000421999" description="1-deoxy-11-beta-hydroxypentalenate dehydrogenase">
    <location>
        <begin position="1"/>
        <end position="282"/>
    </location>
</feature>
<feature type="region of interest" description="Disordered" evidence="3">
    <location>
        <begin position="258"/>
        <end position="282"/>
    </location>
</feature>
<feature type="compositionally biased region" description="Low complexity" evidence="3">
    <location>
        <begin position="267"/>
        <end position="282"/>
    </location>
</feature>
<feature type="active site" description="Proton acceptor" evidence="2">
    <location>
        <position position="157"/>
    </location>
</feature>
<feature type="binding site" evidence="1">
    <location>
        <begin position="12"/>
        <end position="36"/>
    </location>
    <ligand>
        <name>NAD(+)</name>
        <dbReference type="ChEBI" id="CHEBI:57540"/>
    </ligand>
</feature>
<feature type="binding site" evidence="1">
    <location>
        <position position="144"/>
    </location>
    <ligand>
        <name>substrate</name>
    </ligand>
</feature>
<feature type="binding site" evidence="1">
    <location>
        <position position="161"/>
    </location>
    <ligand>
        <name>NAD(+)</name>
        <dbReference type="ChEBI" id="CHEBI:57540"/>
    </ligand>
</feature>
<protein>
    <recommendedName>
        <fullName>1-deoxy-11-beta-hydroxypentalenate dehydrogenase</fullName>
        <ecNumber>1.1.1.340</ecNumber>
    </recommendedName>
    <alternativeName>
        <fullName>Pentalenolactone biosynthesis protein F</fullName>
    </alternativeName>
</protein>
<dbReference type="EC" id="1.1.1.340"/>
<dbReference type="EMBL" id="HQ292065">
    <property type="protein sequence ID" value="ADO85574.1"/>
    <property type="molecule type" value="Genomic_DNA"/>
</dbReference>
<dbReference type="SMR" id="E3VWI6"/>
<dbReference type="UniPathway" id="UPA00974"/>
<dbReference type="GO" id="GO:0016491">
    <property type="term" value="F:oxidoreductase activity"/>
    <property type="evidence" value="ECO:0007669"/>
    <property type="project" value="UniProtKB-KW"/>
</dbReference>
<dbReference type="GO" id="GO:0017000">
    <property type="term" value="P:antibiotic biosynthetic process"/>
    <property type="evidence" value="ECO:0007669"/>
    <property type="project" value="UniProtKB-KW"/>
</dbReference>
<dbReference type="CDD" id="cd05233">
    <property type="entry name" value="SDR_c"/>
    <property type="match status" value="1"/>
</dbReference>
<dbReference type="Gene3D" id="3.40.50.720">
    <property type="entry name" value="NAD(P)-binding Rossmann-like Domain"/>
    <property type="match status" value="1"/>
</dbReference>
<dbReference type="InterPro" id="IPR054968">
    <property type="entry name" value="HdxpentlteDhPtlF"/>
</dbReference>
<dbReference type="InterPro" id="IPR036291">
    <property type="entry name" value="NAD(P)-bd_dom_sf"/>
</dbReference>
<dbReference type="InterPro" id="IPR020904">
    <property type="entry name" value="Sc_DH/Rdtase_CS"/>
</dbReference>
<dbReference type="InterPro" id="IPR002347">
    <property type="entry name" value="SDR_fam"/>
</dbReference>
<dbReference type="NCBIfam" id="NF045814">
    <property type="entry name" value="HdxpentlteDhPtlF"/>
    <property type="match status" value="1"/>
</dbReference>
<dbReference type="PANTHER" id="PTHR43669">
    <property type="entry name" value="5-KETO-D-GLUCONATE 5-REDUCTASE"/>
    <property type="match status" value="1"/>
</dbReference>
<dbReference type="PANTHER" id="PTHR43669:SF3">
    <property type="entry name" value="ALCOHOL DEHYDROGENASE, PUTATIVE (AFU_ORTHOLOGUE AFUA_3G03445)-RELATED"/>
    <property type="match status" value="1"/>
</dbReference>
<dbReference type="Pfam" id="PF00106">
    <property type="entry name" value="adh_short"/>
    <property type="match status" value="1"/>
</dbReference>
<dbReference type="PRINTS" id="PR00081">
    <property type="entry name" value="GDHRDH"/>
</dbReference>
<dbReference type="SMART" id="SM00822">
    <property type="entry name" value="PKS_KR"/>
    <property type="match status" value="1"/>
</dbReference>
<dbReference type="SUPFAM" id="SSF51735">
    <property type="entry name" value="NAD(P)-binding Rossmann-fold domains"/>
    <property type="match status" value="1"/>
</dbReference>
<dbReference type="PROSITE" id="PS00061">
    <property type="entry name" value="ADH_SHORT"/>
    <property type="match status" value="1"/>
</dbReference>
<organism>
    <name type="scientific">Streptomyces arenae</name>
    <dbReference type="NCBI Taxonomy" id="29301"/>
    <lineage>
        <taxon>Bacteria</taxon>
        <taxon>Bacillati</taxon>
        <taxon>Actinomycetota</taxon>
        <taxon>Actinomycetes</taxon>
        <taxon>Kitasatosporales</taxon>
        <taxon>Streptomycetaceae</taxon>
        <taxon>Streptomyces</taxon>
    </lineage>
</organism>
<comment type="function">
    <text evidence="1">Catalyzes the oxidation of 1-deoxy-11-beta-hydroxypentalenic acid to 1-deoxy-11-oxopentalenic acid in the biosynthesis of pentalenolactone antibiotic.</text>
</comment>
<comment type="catalytic activity">
    <reaction>
        <text>1-deoxy-11beta-hydroxypentalenate + NAD(+) = 1-deoxy-11-oxopentalenate + NADH + H(+)</text>
        <dbReference type="Rhea" id="RHEA:34559"/>
        <dbReference type="ChEBI" id="CHEBI:15378"/>
        <dbReference type="ChEBI" id="CHEBI:57540"/>
        <dbReference type="ChEBI" id="CHEBI:57945"/>
        <dbReference type="ChEBI" id="CHEBI:70779"/>
        <dbReference type="ChEBI" id="CHEBI:70780"/>
        <dbReference type="EC" id="1.1.1.340"/>
    </reaction>
</comment>
<comment type="pathway">
    <text>Antibiotic biosynthesis; pentalenolactone biosynthesis.</text>
</comment>
<comment type="similarity">
    <text evidence="4">Belongs to the short-chain dehydrogenases/reductases (SDR) family.</text>
</comment>
<proteinExistence type="inferred from homology"/>